<organism>
    <name type="scientific">Xylella fastidiosa (strain 9a5c)</name>
    <dbReference type="NCBI Taxonomy" id="160492"/>
    <lineage>
        <taxon>Bacteria</taxon>
        <taxon>Pseudomonadati</taxon>
        <taxon>Pseudomonadota</taxon>
        <taxon>Gammaproteobacteria</taxon>
        <taxon>Lysobacterales</taxon>
        <taxon>Lysobacteraceae</taxon>
        <taxon>Xylella</taxon>
    </lineage>
</organism>
<accession>Q9PAF5</accession>
<feature type="chain" id="PRO_0000176481" description="Asparagine--tRNA ligase">
    <location>
        <begin position="1"/>
        <end position="466"/>
    </location>
</feature>
<proteinExistence type="inferred from homology"/>
<comment type="catalytic activity">
    <reaction evidence="1">
        <text>tRNA(Asn) + L-asparagine + ATP = L-asparaginyl-tRNA(Asn) + AMP + diphosphate + H(+)</text>
        <dbReference type="Rhea" id="RHEA:11180"/>
        <dbReference type="Rhea" id="RHEA-COMP:9659"/>
        <dbReference type="Rhea" id="RHEA-COMP:9674"/>
        <dbReference type="ChEBI" id="CHEBI:15378"/>
        <dbReference type="ChEBI" id="CHEBI:30616"/>
        <dbReference type="ChEBI" id="CHEBI:33019"/>
        <dbReference type="ChEBI" id="CHEBI:58048"/>
        <dbReference type="ChEBI" id="CHEBI:78442"/>
        <dbReference type="ChEBI" id="CHEBI:78515"/>
        <dbReference type="ChEBI" id="CHEBI:456215"/>
        <dbReference type="EC" id="6.1.1.22"/>
    </reaction>
</comment>
<comment type="subunit">
    <text evidence="1">Homodimer.</text>
</comment>
<comment type="subcellular location">
    <subcellularLocation>
        <location>Cytoplasm</location>
    </subcellularLocation>
</comment>
<comment type="similarity">
    <text evidence="1">Belongs to the class-II aminoacyl-tRNA synthetase family.</text>
</comment>
<evidence type="ECO:0000255" key="1">
    <source>
        <dbReference type="HAMAP-Rule" id="MF_00534"/>
    </source>
</evidence>
<dbReference type="EC" id="6.1.1.22" evidence="1"/>
<dbReference type="EMBL" id="AE003849">
    <property type="protein sequence ID" value="AAF85360.1"/>
    <property type="molecule type" value="Genomic_DNA"/>
</dbReference>
<dbReference type="PIR" id="F82540">
    <property type="entry name" value="F82540"/>
</dbReference>
<dbReference type="RefSeq" id="WP_010894982.1">
    <property type="nucleotide sequence ID" value="NC_002488.3"/>
</dbReference>
<dbReference type="SMR" id="Q9PAF5"/>
<dbReference type="STRING" id="160492.XF_2563"/>
<dbReference type="KEGG" id="xfa:XF_2563"/>
<dbReference type="eggNOG" id="COG0017">
    <property type="taxonomic scope" value="Bacteria"/>
</dbReference>
<dbReference type="HOGENOM" id="CLU_004553_2_0_6"/>
<dbReference type="Proteomes" id="UP000000812">
    <property type="component" value="Chromosome"/>
</dbReference>
<dbReference type="GO" id="GO:0005737">
    <property type="term" value="C:cytoplasm"/>
    <property type="evidence" value="ECO:0007669"/>
    <property type="project" value="UniProtKB-SubCell"/>
</dbReference>
<dbReference type="GO" id="GO:0004816">
    <property type="term" value="F:asparagine-tRNA ligase activity"/>
    <property type="evidence" value="ECO:0007669"/>
    <property type="project" value="UniProtKB-UniRule"/>
</dbReference>
<dbReference type="GO" id="GO:0005524">
    <property type="term" value="F:ATP binding"/>
    <property type="evidence" value="ECO:0007669"/>
    <property type="project" value="UniProtKB-UniRule"/>
</dbReference>
<dbReference type="GO" id="GO:0003676">
    <property type="term" value="F:nucleic acid binding"/>
    <property type="evidence" value="ECO:0007669"/>
    <property type="project" value="InterPro"/>
</dbReference>
<dbReference type="GO" id="GO:0006421">
    <property type="term" value="P:asparaginyl-tRNA aminoacylation"/>
    <property type="evidence" value="ECO:0007669"/>
    <property type="project" value="UniProtKB-UniRule"/>
</dbReference>
<dbReference type="CDD" id="cd00776">
    <property type="entry name" value="AsxRS_core"/>
    <property type="match status" value="1"/>
</dbReference>
<dbReference type="CDD" id="cd04318">
    <property type="entry name" value="EcAsnRS_like_N"/>
    <property type="match status" value="1"/>
</dbReference>
<dbReference type="FunFam" id="3.30.930.10:FF:000016">
    <property type="entry name" value="Asparagine--tRNA ligase"/>
    <property type="match status" value="1"/>
</dbReference>
<dbReference type="Gene3D" id="3.30.930.10">
    <property type="entry name" value="Bira Bifunctional Protein, Domain 2"/>
    <property type="match status" value="1"/>
</dbReference>
<dbReference type="Gene3D" id="2.40.50.140">
    <property type="entry name" value="Nucleic acid-binding proteins"/>
    <property type="match status" value="1"/>
</dbReference>
<dbReference type="HAMAP" id="MF_00534">
    <property type="entry name" value="Asn_tRNA_synth"/>
    <property type="match status" value="1"/>
</dbReference>
<dbReference type="InterPro" id="IPR004364">
    <property type="entry name" value="Aa-tRNA-synt_II"/>
</dbReference>
<dbReference type="InterPro" id="IPR006195">
    <property type="entry name" value="aa-tRNA-synth_II"/>
</dbReference>
<dbReference type="InterPro" id="IPR045864">
    <property type="entry name" value="aa-tRNA-synth_II/BPL/LPL"/>
</dbReference>
<dbReference type="InterPro" id="IPR004522">
    <property type="entry name" value="Asn-tRNA-ligase"/>
</dbReference>
<dbReference type="InterPro" id="IPR002312">
    <property type="entry name" value="Asp/Asn-tRNA-synth_IIb"/>
</dbReference>
<dbReference type="InterPro" id="IPR012340">
    <property type="entry name" value="NA-bd_OB-fold"/>
</dbReference>
<dbReference type="InterPro" id="IPR004365">
    <property type="entry name" value="NA-bd_OB_tRNA"/>
</dbReference>
<dbReference type="NCBIfam" id="TIGR00457">
    <property type="entry name" value="asnS"/>
    <property type="match status" value="1"/>
</dbReference>
<dbReference type="NCBIfam" id="NF003037">
    <property type="entry name" value="PRK03932.1"/>
    <property type="match status" value="1"/>
</dbReference>
<dbReference type="PANTHER" id="PTHR22594:SF34">
    <property type="entry name" value="ASPARAGINE--TRNA LIGASE, MITOCHONDRIAL-RELATED"/>
    <property type="match status" value="1"/>
</dbReference>
<dbReference type="PANTHER" id="PTHR22594">
    <property type="entry name" value="ASPARTYL/LYSYL-TRNA SYNTHETASE"/>
    <property type="match status" value="1"/>
</dbReference>
<dbReference type="Pfam" id="PF00152">
    <property type="entry name" value="tRNA-synt_2"/>
    <property type="match status" value="1"/>
</dbReference>
<dbReference type="Pfam" id="PF01336">
    <property type="entry name" value="tRNA_anti-codon"/>
    <property type="match status" value="1"/>
</dbReference>
<dbReference type="PRINTS" id="PR01042">
    <property type="entry name" value="TRNASYNTHASP"/>
</dbReference>
<dbReference type="SUPFAM" id="SSF55681">
    <property type="entry name" value="Class II aaRS and biotin synthetases"/>
    <property type="match status" value="1"/>
</dbReference>
<dbReference type="SUPFAM" id="SSF50249">
    <property type="entry name" value="Nucleic acid-binding proteins"/>
    <property type="match status" value="1"/>
</dbReference>
<dbReference type="PROSITE" id="PS50862">
    <property type="entry name" value="AA_TRNA_LIGASE_II"/>
    <property type="match status" value="1"/>
</dbReference>
<gene>
    <name evidence="1" type="primary">asnS</name>
    <name type="ordered locus">XF_2563</name>
</gene>
<protein>
    <recommendedName>
        <fullName evidence="1">Asparagine--tRNA ligase</fullName>
        <ecNumber evidence="1">6.1.1.22</ecNumber>
    </recommendedName>
    <alternativeName>
        <fullName evidence="1">Asparaginyl-tRNA synthetase</fullName>
        <shortName evidence="1">AsnRS</shortName>
    </alternativeName>
</protein>
<name>SYN_XYLFA</name>
<keyword id="KW-0030">Aminoacyl-tRNA synthetase</keyword>
<keyword id="KW-0067">ATP-binding</keyword>
<keyword id="KW-0963">Cytoplasm</keyword>
<keyword id="KW-0436">Ligase</keyword>
<keyword id="KW-0547">Nucleotide-binding</keyword>
<keyword id="KW-0648">Protein biosynthesis</keyword>
<reference key="1">
    <citation type="journal article" date="2000" name="Nature">
        <title>The genome sequence of the plant pathogen Xylella fastidiosa.</title>
        <authorList>
            <person name="Simpson A.J.G."/>
            <person name="Reinach F.C."/>
            <person name="Arruda P."/>
            <person name="Abreu F.A."/>
            <person name="Acencio M."/>
            <person name="Alvarenga R."/>
            <person name="Alves L.M.C."/>
            <person name="Araya J.E."/>
            <person name="Baia G.S."/>
            <person name="Baptista C.S."/>
            <person name="Barros M.H."/>
            <person name="Bonaccorsi E.D."/>
            <person name="Bordin S."/>
            <person name="Bove J.M."/>
            <person name="Briones M.R.S."/>
            <person name="Bueno M.R.P."/>
            <person name="Camargo A.A."/>
            <person name="Camargo L.E.A."/>
            <person name="Carraro D.M."/>
            <person name="Carrer H."/>
            <person name="Colauto N.B."/>
            <person name="Colombo C."/>
            <person name="Costa F.F."/>
            <person name="Costa M.C.R."/>
            <person name="Costa-Neto C.M."/>
            <person name="Coutinho L.L."/>
            <person name="Cristofani M."/>
            <person name="Dias-Neto E."/>
            <person name="Docena C."/>
            <person name="El-Dorry H."/>
            <person name="Facincani A.P."/>
            <person name="Ferreira A.J.S."/>
            <person name="Ferreira V.C.A."/>
            <person name="Ferro J.A."/>
            <person name="Fraga J.S."/>
            <person name="Franca S.C."/>
            <person name="Franco M.C."/>
            <person name="Frohme M."/>
            <person name="Furlan L.R."/>
            <person name="Garnier M."/>
            <person name="Goldman G.H."/>
            <person name="Goldman M.H.S."/>
            <person name="Gomes S.L."/>
            <person name="Gruber A."/>
            <person name="Ho P.L."/>
            <person name="Hoheisel J.D."/>
            <person name="Junqueira M.L."/>
            <person name="Kemper E.L."/>
            <person name="Kitajima J.P."/>
            <person name="Krieger J.E."/>
            <person name="Kuramae E.E."/>
            <person name="Laigret F."/>
            <person name="Lambais M.R."/>
            <person name="Leite L.C.C."/>
            <person name="Lemos E.G.M."/>
            <person name="Lemos M.V.F."/>
            <person name="Lopes S.A."/>
            <person name="Lopes C.R."/>
            <person name="Machado J.A."/>
            <person name="Machado M.A."/>
            <person name="Madeira A.M.B.N."/>
            <person name="Madeira H.M.F."/>
            <person name="Marino C.L."/>
            <person name="Marques M.V."/>
            <person name="Martins E.A.L."/>
            <person name="Martins E.M.F."/>
            <person name="Matsukuma A.Y."/>
            <person name="Menck C.F.M."/>
            <person name="Miracca E.C."/>
            <person name="Miyaki C.Y."/>
            <person name="Monteiro-Vitorello C.B."/>
            <person name="Moon D.H."/>
            <person name="Nagai M.A."/>
            <person name="Nascimento A.L.T.O."/>
            <person name="Netto L.E.S."/>
            <person name="Nhani A. Jr."/>
            <person name="Nobrega F.G."/>
            <person name="Nunes L.R."/>
            <person name="Oliveira M.A."/>
            <person name="de Oliveira M.C."/>
            <person name="de Oliveira R.C."/>
            <person name="Palmieri D.A."/>
            <person name="Paris A."/>
            <person name="Peixoto B.R."/>
            <person name="Pereira G.A.G."/>
            <person name="Pereira H.A. Jr."/>
            <person name="Pesquero J.B."/>
            <person name="Quaggio R.B."/>
            <person name="Roberto P.G."/>
            <person name="Rodrigues V."/>
            <person name="de Rosa A.J.M."/>
            <person name="de Rosa V.E. Jr."/>
            <person name="de Sa R.G."/>
            <person name="Santelli R.V."/>
            <person name="Sawasaki H.E."/>
            <person name="da Silva A.C.R."/>
            <person name="da Silva A.M."/>
            <person name="da Silva F.R."/>
            <person name="Silva W.A. Jr."/>
            <person name="da Silveira J.F."/>
            <person name="Silvestri M.L.Z."/>
            <person name="Siqueira W.J."/>
            <person name="de Souza A.A."/>
            <person name="de Souza A.P."/>
            <person name="Terenzi M.F."/>
            <person name="Truffi D."/>
            <person name="Tsai S.M."/>
            <person name="Tsuhako M.H."/>
            <person name="Vallada H."/>
            <person name="Van Sluys M.A."/>
            <person name="Verjovski-Almeida S."/>
            <person name="Vettore A.L."/>
            <person name="Zago M.A."/>
            <person name="Zatz M."/>
            <person name="Meidanis J."/>
            <person name="Setubal J.C."/>
        </authorList>
    </citation>
    <scope>NUCLEOTIDE SEQUENCE [LARGE SCALE GENOMIC DNA]</scope>
    <source>
        <strain>9a5c</strain>
    </source>
</reference>
<sequence>MTVASVEQMFSGKIQVGSEVTVRGWVRTRRDSKAGLSFVSVSDGSCFAAIQVVTPAHLPNYETEVRKLTTGCAVIVIGTLAPSLGQGQQFEIQAQSIEVVGWVEDPETYPIQPKQHSLEFLREVAHLRPRTNLFGAVARIRHCLSQAVHRFFHENGYYWITTPIITTSDAEGAGQMFRVSTLDLVNLPRTETGGIDFSHDFFGKETFLTVSGQLNVEAYALALSKVYTFGPTFRAENSHTPRHLAEFWMIEPEIAFADLAEDARVAEQFLKFLFKTVLEERTDDLAFITERVEKTTISKLEGFIKSPFERIEYTDAIKLLERSGKKFDFPVEWGLDLQTEHERWLTEKHIGRPVVVTNYPEHIKAFYMRLNDDGKTVAAMDVLAPGIGEIIGGSQREERLEMLDIRMAQFGLDPTHYQWYRDFRRYGSVPHAGFGLGFERLMVYVCGLSNIRDAIPYPRAPSSAEF</sequence>